<name>MET3_NEUCR</name>
<reference key="1">
    <citation type="journal article" date="2003" name="Nucleic Acids Res.">
        <title>What's in the genome of a filamentous fungus? Analysis of the Neurospora genome sequence.</title>
        <authorList>
            <person name="Mannhaupt G."/>
            <person name="Montrone C."/>
            <person name="Haase D."/>
            <person name="Mewes H.-W."/>
            <person name="Aign V."/>
            <person name="Hoheisel J.D."/>
            <person name="Fartmann B."/>
            <person name="Nyakatura G."/>
            <person name="Kempken F."/>
            <person name="Maier J."/>
            <person name="Schulte U."/>
        </authorList>
    </citation>
    <scope>NUCLEOTIDE SEQUENCE [LARGE SCALE GENOMIC DNA]</scope>
    <source>
        <strain>ATCC 24698 / 74-OR23-1A / CBS 708.71 / DSM 1257 / FGSC 987</strain>
    </source>
</reference>
<reference key="2">
    <citation type="journal article" date="2003" name="Nature">
        <title>The genome sequence of the filamentous fungus Neurospora crassa.</title>
        <authorList>
            <person name="Galagan J.E."/>
            <person name="Calvo S.E."/>
            <person name="Borkovich K.A."/>
            <person name="Selker E.U."/>
            <person name="Read N.D."/>
            <person name="Jaffe D.B."/>
            <person name="FitzHugh W."/>
            <person name="Ma L.-J."/>
            <person name="Smirnov S."/>
            <person name="Purcell S."/>
            <person name="Rehman B."/>
            <person name="Elkins T."/>
            <person name="Engels R."/>
            <person name="Wang S."/>
            <person name="Nielsen C.B."/>
            <person name="Butler J."/>
            <person name="Endrizzi M."/>
            <person name="Qui D."/>
            <person name="Ianakiev P."/>
            <person name="Bell-Pedersen D."/>
            <person name="Nelson M.A."/>
            <person name="Werner-Washburne M."/>
            <person name="Selitrennikoff C.P."/>
            <person name="Kinsey J.A."/>
            <person name="Braun E.L."/>
            <person name="Zelter A."/>
            <person name="Schulte U."/>
            <person name="Kothe G.O."/>
            <person name="Jedd G."/>
            <person name="Mewes H.-W."/>
            <person name="Staben C."/>
            <person name="Marcotte E."/>
            <person name="Greenberg D."/>
            <person name="Roy A."/>
            <person name="Foley K."/>
            <person name="Naylor J."/>
            <person name="Stange-Thomann N."/>
            <person name="Barrett R."/>
            <person name="Gnerre S."/>
            <person name="Kamal M."/>
            <person name="Kamvysselis M."/>
            <person name="Mauceli E.W."/>
            <person name="Bielke C."/>
            <person name="Rudd S."/>
            <person name="Frishman D."/>
            <person name="Krystofova S."/>
            <person name="Rasmussen C."/>
            <person name="Metzenberg R.L."/>
            <person name="Perkins D.D."/>
            <person name="Kroken S."/>
            <person name="Cogoni C."/>
            <person name="Macino G."/>
            <person name="Catcheside D.E.A."/>
            <person name="Li W."/>
            <person name="Pratt R.J."/>
            <person name="Osmani S.A."/>
            <person name="DeSouza C.P.C."/>
            <person name="Glass N.L."/>
            <person name="Orbach M.J."/>
            <person name="Berglund J.A."/>
            <person name="Voelker R."/>
            <person name="Yarden O."/>
            <person name="Plamann M."/>
            <person name="Seiler S."/>
            <person name="Dunlap J.C."/>
            <person name="Radford A."/>
            <person name="Aramayo R."/>
            <person name="Natvig D.O."/>
            <person name="Alex L.A."/>
            <person name="Mannhaupt G."/>
            <person name="Ebbole D.J."/>
            <person name="Freitag M."/>
            <person name="Paulsen I."/>
            <person name="Sachs M.S."/>
            <person name="Lander E.S."/>
            <person name="Nusbaum C."/>
            <person name="Birren B.W."/>
        </authorList>
    </citation>
    <scope>NUCLEOTIDE SEQUENCE [LARGE SCALE GENOMIC DNA]</scope>
    <source>
        <strain>ATCC 24698 / 74-OR23-1A / CBS 708.71 / DSM 1257 / FGSC 987</strain>
    </source>
</reference>
<sequence>MSNPPHGGVLKDLIARDLPRHAELEAEAETLPALLLSERQLCDLELILNGGFSPLEGFMNQEDYNDVVKENRLASGLLFSMPITLDVSEETISELGLKAGARITLRDFRDDRNLAILTVDDVYKPDKALEAKEVFGGDEEHPAVKFLYETAKEYYVGGKLEAVNKLQHYDFVDLRYSPAEIRTHFDKLGWSRVVAFQTRNPMHRAHRELTVRAARSHHANVLIHPVVGLTKPGDIDHFTRVRVYKALLPRYPNGMAVLGLLPLAMRMGGPREAIWHAIIRKNHGATHFIVGRDHAGPGKNSKGVDFYGPYDAQYAVEKYRDELGIEVVPFQMMTYLPDSDEYAPVDQIPKGVRTLNISGTELRARLRSGREIPEWFSYPEVVKVLRESHPPRSQQGFTVLFTGYPNSGKDQIARALQVTLNQQGGRSVSLFLGENIRHELSSELGYNREDRDKNIARIAFVASELTRSGAAVIAAPIAPFEKARQNARELVEKYGDFYLVHVATPLEYCEKTDKRGIYAKARAGEIENFTGVNDPYETPAKPDLVVDCEKQSVRSIVHQIILLLESQGLLDRF</sequence>
<evidence type="ECO:0000255" key="1">
    <source>
        <dbReference type="HAMAP-Rule" id="MF_03106"/>
    </source>
</evidence>
<feature type="chain" id="PRO_0000283690" description="Sulfate adenylyltransferase">
    <location>
        <begin position="1"/>
        <end position="573"/>
    </location>
</feature>
<feature type="region of interest" description="N-terminal" evidence="1">
    <location>
        <begin position="1"/>
        <end position="169"/>
    </location>
</feature>
<feature type="region of interest" description="Catalytic" evidence="1">
    <location>
        <begin position="170"/>
        <end position="394"/>
    </location>
</feature>
<feature type="region of interest" description="Allosteric regulation domain; adenylyl-sulfate kinase-like" evidence="1">
    <location>
        <begin position="395"/>
        <end position="573"/>
    </location>
</feature>
<feature type="active site" evidence="1">
    <location>
        <position position="198"/>
    </location>
</feature>
<feature type="active site" evidence="1">
    <location>
        <position position="199"/>
    </location>
</feature>
<feature type="active site" evidence="1">
    <location>
        <position position="200"/>
    </location>
</feature>
<feature type="binding site" evidence="1">
    <location>
        <begin position="197"/>
        <end position="200"/>
    </location>
    <ligand>
        <name>ATP</name>
        <dbReference type="ChEBI" id="CHEBI:30616"/>
    </ligand>
</feature>
<feature type="binding site" evidence="1">
    <location>
        <position position="197"/>
    </location>
    <ligand>
        <name>sulfate</name>
        <dbReference type="ChEBI" id="CHEBI:16189"/>
    </ligand>
</feature>
<feature type="binding site" evidence="1">
    <location>
        <position position="199"/>
    </location>
    <ligand>
        <name>sulfate</name>
        <dbReference type="ChEBI" id="CHEBI:16189"/>
    </ligand>
</feature>
<feature type="binding site" evidence="1">
    <location>
        <begin position="291"/>
        <end position="294"/>
    </location>
    <ligand>
        <name>ATP</name>
        <dbReference type="ChEBI" id="CHEBI:30616"/>
    </ligand>
</feature>
<feature type="binding site" evidence="1">
    <location>
        <position position="295"/>
    </location>
    <ligand>
        <name>sulfate</name>
        <dbReference type="ChEBI" id="CHEBI:16189"/>
    </ligand>
</feature>
<feature type="binding site" evidence="1">
    <location>
        <position position="333"/>
    </location>
    <ligand>
        <name>ATP</name>
        <dbReference type="ChEBI" id="CHEBI:30616"/>
    </ligand>
</feature>
<feature type="binding site" evidence="1">
    <location>
        <begin position="434"/>
        <end position="437"/>
    </location>
    <ligand>
        <name>3'-phosphoadenylyl sulfate</name>
        <dbReference type="ChEBI" id="CHEBI:58339"/>
        <note>allosteric inhibitor</note>
    </ligand>
</feature>
<feature type="binding site" evidence="1">
    <location>
        <position position="451"/>
    </location>
    <ligand>
        <name>3'-phosphoadenylyl sulfate</name>
        <dbReference type="ChEBI" id="CHEBI:58339"/>
        <note>allosteric inhibitor</note>
    </ligand>
</feature>
<feature type="binding site" evidence="1">
    <location>
        <begin position="477"/>
        <end position="478"/>
    </location>
    <ligand>
        <name>3'-phosphoadenylyl sulfate</name>
        <dbReference type="ChEBI" id="CHEBI:58339"/>
        <note>allosteric inhibitor</note>
    </ligand>
</feature>
<feature type="binding site" evidence="1">
    <location>
        <position position="515"/>
    </location>
    <ligand>
        <name>3'-phosphoadenylyl sulfate</name>
        <dbReference type="ChEBI" id="CHEBI:58339"/>
        <note>allosteric inhibitor</note>
    </ligand>
</feature>
<feature type="site" description="Transition state stabilizer" evidence="1">
    <location>
        <position position="203"/>
    </location>
</feature>
<feature type="site" description="Transition state stabilizer" evidence="1">
    <location>
        <position position="206"/>
    </location>
</feature>
<feature type="site" description="Induces change in substrate recognition on ATP binding" evidence="1">
    <location>
        <position position="330"/>
    </location>
</feature>
<accession>Q7SE75</accession>
<gene>
    <name type="primary">cys-11</name>
    <name type="synonym">met3</name>
    <name type="ORF">B13D15.110</name>
    <name type="ORF">NCU01985</name>
</gene>
<dbReference type="EC" id="2.7.7.4" evidence="1"/>
<dbReference type="EMBL" id="BX842630">
    <property type="protein sequence ID" value="CAE76366.1"/>
    <property type="molecule type" value="Genomic_DNA"/>
</dbReference>
<dbReference type="EMBL" id="CM002236">
    <property type="protein sequence ID" value="EAA35113.1"/>
    <property type="molecule type" value="Genomic_DNA"/>
</dbReference>
<dbReference type="RefSeq" id="XP_964349.1">
    <property type="nucleotide sequence ID" value="XM_959256.2"/>
</dbReference>
<dbReference type="SMR" id="Q7SE75"/>
<dbReference type="FunCoup" id="Q7SE75">
    <property type="interactions" value="553"/>
</dbReference>
<dbReference type="STRING" id="367110.Q7SE75"/>
<dbReference type="PaxDb" id="5141-EFNCRP00000001246"/>
<dbReference type="EnsemblFungi" id="EAA35113">
    <property type="protein sequence ID" value="EAA35113"/>
    <property type="gene ID" value="NCU01985"/>
</dbReference>
<dbReference type="GeneID" id="3880498"/>
<dbReference type="KEGG" id="ncr:NCU01985"/>
<dbReference type="VEuPathDB" id="FungiDB:NCU01985"/>
<dbReference type="HOGENOM" id="CLU_022950_0_0_1"/>
<dbReference type="InParanoid" id="Q7SE75"/>
<dbReference type="OrthoDB" id="468at2759"/>
<dbReference type="UniPathway" id="UPA00140">
    <property type="reaction ID" value="UER00204"/>
</dbReference>
<dbReference type="Proteomes" id="UP000001805">
    <property type="component" value="Chromosome 1, Linkage Group I"/>
</dbReference>
<dbReference type="GO" id="GO:0005737">
    <property type="term" value="C:cytoplasm"/>
    <property type="evidence" value="ECO:0007669"/>
    <property type="project" value="UniProtKB-SubCell"/>
</dbReference>
<dbReference type="GO" id="GO:0004020">
    <property type="term" value="F:adenylylsulfate kinase activity"/>
    <property type="evidence" value="ECO:0007669"/>
    <property type="project" value="InterPro"/>
</dbReference>
<dbReference type="GO" id="GO:0005524">
    <property type="term" value="F:ATP binding"/>
    <property type="evidence" value="ECO:0007669"/>
    <property type="project" value="UniProtKB-KW"/>
</dbReference>
<dbReference type="GO" id="GO:0004781">
    <property type="term" value="F:sulfate adenylyltransferase (ATP) activity"/>
    <property type="evidence" value="ECO:0000318"/>
    <property type="project" value="GO_Central"/>
</dbReference>
<dbReference type="GO" id="GO:0019344">
    <property type="term" value="P:cysteine biosynthetic process"/>
    <property type="evidence" value="ECO:0007669"/>
    <property type="project" value="UniProtKB-KW"/>
</dbReference>
<dbReference type="GO" id="GO:0070814">
    <property type="term" value="P:hydrogen sulfide biosynthetic process"/>
    <property type="evidence" value="ECO:0007669"/>
    <property type="project" value="UniProtKB-UniRule"/>
</dbReference>
<dbReference type="GO" id="GO:0009086">
    <property type="term" value="P:methionine biosynthetic process"/>
    <property type="evidence" value="ECO:0007669"/>
    <property type="project" value="UniProtKB-KW"/>
</dbReference>
<dbReference type="GO" id="GO:0019379">
    <property type="term" value="P:sulfate assimilation, phosphoadenylyl sulfate reduction by phosphoadenylyl-sulfate reductase (thioredoxin)"/>
    <property type="evidence" value="ECO:0000318"/>
    <property type="project" value="GO_Central"/>
</dbReference>
<dbReference type="CDD" id="cd02027">
    <property type="entry name" value="APSK"/>
    <property type="match status" value="1"/>
</dbReference>
<dbReference type="CDD" id="cd00517">
    <property type="entry name" value="ATPS"/>
    <property type="match status" value="1"/>
</dbReference>
<dbReference type="FunFam" id="3.10.400.10:FF:000003">
    <property type="entry name" value="Sulfate adenylyltransferase"/>
    <property type="match status" value="1"/>
</dbReference>
<dbReference type="FunFam" id="3.40.50.300:FF:000802">
    <property type="entry name" value="Sulfate adenylyltransferase"/>
    <property type="match status" value="1"/>
</dbReference>
<dbReference type="FunFam" id="3.40.50.620:FF:000052">
    <property type="entry name" value="Sulfate adenylyltransferase"/>
    <property type="match status" value="1"/>
</dbReference>
<dbReference type="Gene3D" id="3.40.50.620">
    <property type="entry name" value="HUPs"/>
    <property type="match status" value="1"/>
</dbReference>
<dbReference type="Gene3D" id="3.40.50.300">
    <property type="entry name" value="P-loop containing nucleotide triphosphate hydrolases"/>
    <property type="match status" value="1"/>
</dbReference>
<dbReference type="Gene3D" id="3.10.400.10">
    <property type="entry name" value="Sulfate adenylyltransferase"/>
    <property type="match status" value="1"/>
</dbReference>
<dbReference type="HAMAP" id="MF_03106">
    <property type="entry name" value="Sulf_adenylyltr_euk"/>
    <property type="match status" value="1"/>
</dbReference>
<dbReference type="InterPro" id="IPR002891">
    <property type="entry name" value="APS_kinase"/>
</dbReference>
<dbReference type="InterPro" id="IPR025980">
    <property type="entry name" value="ATP-Sase_PUA-like_dom"/>
</dbReference>
<dbReference type="InterPro" id="IPR027417">
    <property type="entry name" value="P-loop_NTPase"/>
</dbReference>
<dbReference type="InterPro" id="IPR015947">
    <property type="entry name" value="PUA-like_sf"/>
</dbReference>
<dbReference type="InterPro" id="IPR014729">
    <property type="entry name" value="Rossmann-like_a/b/a_fold"/>
</dbReference>
<dbReference type="InterPro" id="IPR027535">
    <property type="entry name" value="Sulf_adenylyltr_euk"/>
</dbReference>
<dbReference type="InterPro" id="IPR050512">
    <property type="entry name" value="Sulf_AdTrans/APS_kinase"/>
</dbReference>
<dbReference type="InterPro" id="IPR024951">
    <property type="entry name" value="Sulfurylase_cat_dom"/>
</dbReference>
<dbReference type="InterPro" id="IPR002650">
    <property type="entry name" value="Sulphate_adenylyltransferase"/>
</dbReference>
<dbReference type="NCBIfam" id="TIGR00455">
    <property type="entry name" value="apsK"/>
    <property type="match status" value="1"/>
</dbReference>
<dbReference type="NCBIfam" id="NF004040">
    <property type="entry name" value="PRK05537.1"/>
    <property type="match status" value="1"/>
</dbReference>
<dbReference type="NCBIfam" id="TIGR00339">
    <property type="entry name" value="sopT"/>
    <property type="match status" value="1"/>
</dbReference>
<dbReference type="PANTHER" id="PTHR42700">
    <property type="entry name" value="SULFATE ADENYLYLTRANSFERASE"/>
    <property type="match status" value="1"/>
</dbReference>
<dbReference type="PANTHER" id="PTHR42700:SF1">
    <property type="entry name" value="SULFATE ADENYLYLTRANSFERASE"/>
    <property type="match status" value="1"/>
</dbReference>
<dbReference type="Pfam" id="PF01583">
    <property type="entry name" value="APS_kinase"/>
    <property type="match status" value="1"/>
</dbReference>
<dbReference type="Pfam" id="PF01747">
    <property type="entry name" value="ATP-sulfurylase"/>
    <property type="match status" value="1"/>
</dbReference>
<dbReference type="Pfam" id="PF14306">
    <property type="entry name" value="PUA_2"/>
    <property type="match status" value="1"/>
</dbReference>
<dbReference type="SUPFAM" id="SSF52374">
    <property type="entry name" value="Nucleotidylyl transferase"/>
    <property type="match status" value="1"/>
</dbReference>
<dbReference type="SUPFAM" id="SSF52540">
    <property type="entry name" value="P-loop containing nucleoside triphosphate hydrolases"/>
    <property type="match status" value="1"/>
</dbReference>
<dbReference type="SUPFAM" id="SSF88697">
    <property type="entry name" value="PUA domain-like"/>
    <property type="match status" value="1"/>
</dbReference>
<comment type="function">
    <text evidence="1">Catalyzes the first intracellular reaction of sulfate assimilation, forming adenosine-5'-phosphosulfate (APS) from inorganic sulfate and ATP. Plays an important role in sulfate activation as a component of the biosynthesis pathway of sulfur-containing amino acids.</text>
</comment>
<comment type="catalytic activity">
    <reaction evidence="1">
        <text>sulfate + ATP + H(+) = adenosine 5'-phosphosulfate + diphosphate</text>
        <dbReference type="Rhea" id="RHEA:18133"/>
        <dbReference type="ChEBI" id="CHEBI:15378"/>
        <dbReference type="ChEBI" id="CHEBI:16189"/>
        <dbReference type="ChEBI" id="CHEBI:30616"/>
        <dbReference type="ChEBI" id="CHEBI:33019"/>
        <dbReference type="ChEBI" id="CHEBI:58243"/>
        <dbReference type="EC" id="2.7.7.4"/>
    </reaction>
</comment>
<comment type="activity regulation">
    <text evidence="1">Allosterically inhibited by 3'-phosphoadenosine 5'-phosphosulfate (PAPS).</text>
</comment>
<comment type="pathway">
    <text evidence="1">Sulfur metabolism; hydrogen sulfide biosynthesis; sulfite from sulfate: step 1/3.</text>
</comment>
<comment type="subunit">
    <text evidence="1">Homohexamer. Dimer of trimers.</text>
</comment>
<comment type="subcellular location">
    <subcellularLocation>
        <location evidence="1">Cytoplasm</location>
    </subcellularLocation>
</comment>
<comment type="domain">
    <text evidence="1">The adenylyl-sulfate kinase (APS kinase) is non-functional. It is involved in allosteric regulation by PAPS. PAPS binding induces a large rotational rearrangement of domains lowering the substrate affinity of the enzyme.</text>
</comment>
<comment type="similarity">
    <text evidence="1">In the N-terminal section; belongs to the sulfate adenylyltransferase family.</text>
</comment>
<comment type="similarity">
    <text evidence="1">In the C-terminal section; belongs to the APS kinase family.</text>
</comment>
<proteinExistence type="inferred from homology"/>
<organism>
    <name type="scientific">Neurospora crassa (strain ATCC 24698 / 74-OR23-1A / CBS 708.71 / DSM 1257 / FGSC 987)</name>
    <dbReference type="NCBI Taxonomy" id="367110"/>
    <lineage>
        <taxon>Eukaryota</taxon>
        <taxon>Fungi</taxon>
        <taxon>Dikarya</taxon>
        <taxon>Ascomycota</taxon>
        <taxon>Pezizomycotina</taxon>
        <taxon>Sordariomycetes</taxon>
        <taxon>Sordariomycetidae</taxon>
        <taxon>Sordariales</taxon>
        <taxon>Sordariaceae</taxon>
        <taxon>Neurospora</taxon>
    </lineage>
</organism>
<keyword id="KW-0021">Allosteric enzyme</keyword>
<keyword id="KW-0028">Amino-acid biosynthesis</keyword>
<keyword id="KW-0067">ATP-binding</keyword>
<keyword id="KW-0198">Cysteine biosynthesis</keyword>
<keyword id="KW-0963">Cytoplasm</keyword>
<keyword id="KW-0486">Methionine biosynthesis</keyword>
<keyword id="KW-0547">Nucleotide-binding</keyword>
<keyword id="KW-0548">Nucleotidyltransferase</keyword>
<keyword id="KW-1185">Reference proteome</keyword>
<keyword id="KW-0808">Transferase</keyword>
<protein>
    <recommendedName>
        <fullName evidence="1">Sulfate adenylyltransferase</fullName>
        <ecNumber evidence="1">2.7.7.4</ecNumber>
    </recommendedName>
    <alternativeName>
        <fullName evidence="1">ATP-sulfurylase</fullName>
    </alternativeName>
    <alternativeName>
        <fullName evidence="1">Sulfate adenylate transferase</fullName>
        <shortName evidence="1">SAT</shortName>
    </alternativeName>
</protein>